<protein>
    <recommendedName>
        <fullName evidence="10">Aegyptin</fullName>
    </recommendedName>
    <alternativeName>
        <fullName evidence="11">30 kDa salivary gland allergen Aed a 3</fullName>
    </alternativeName>
    <allergenName evidence="11">Aed a 3</allergenName>
</protein>
<gene>
    <name type="ORF">AAEL010235</name>
</gene>
<organism>
    <name type="scientific">Aedes aegypti</name>
    <name type="common">Yellowfever mosquito</name>
    <name type="synonym">Culex aegypti</name>
    <dbReference type="NCBI Taxonomy" id="7159"/>
    <lineage>
        <taxon>Eukaryota</taxon>
        <taxon>Metazoa</taxon>
        <taxon>Ecdysozoa</taxon>
        <taxon>Arthropoda</taxon>
        <taxon>Hexapoda</taxon>
        <taxon>Insecta</taxon>
        <taxon>Pterygota</taxon>
        <taxon>Neoptera</taxon>
        <taxon>Endopterygota</taxon>
        <taxon>Diptera</taxon>
        <taxon>Nematocera</taxon>
        <taxon>Culicoidea</taxon>
        <taxon>Culicidae</taxon>
        <taxon>Culicinae</taxon>
        <taxon>Aedini</taxon>
        <taxon>Aedes</taxon>
        <taxon>Stegomyia</taxon>
    </lineage>
</organism>
<proteinExistence type="evidence at protein level"/>
<accession>O01949</accession>
<accession>Q1HRK2</accession>
<accession>Q1HRK5</accession>
<evidence type="ECO:0000250" key="1">
    <source>
        <dbReference type="UniProtKB" id="Q7YT37"/>
    </source>
</evidence>
<evidence type="ECO:0000256" key="2">
    <source>
        <dbReference type="SAM" id="MobiDB-lite"/>
    </source>
</evidence>
<evidence type="ECO:0000269" key="3">
    <source>
    </source>
</evidence>
<evidence type="ECO:0000269" key="4">
    <source>
    </source>
</evidence>
<evidence type="ECO:0000269" key="5">
    <source>
    </source>
</evidence>
<evidence type="ECO:0000269" key="6">
    <source>
    </source>
</evidence>
<evidence type="ECO:0000269" key="7">
    <source>
    </source>
</evidence>
<evidence type="ECO:0000269" key="8">
    <source>
    </source>
</evidence>
<evidence type="ECO:0000303" key="9">
    <source>
    </source>
</evidence>
<evidence type="ECO:0000303" key="10">
    <source>
    </source>
</evidence>
<evidence type="ECO:0000303" key="11">
    <source>
    </source>
</evidence>
<evidence type="ECO:0000303" key="12">
    <source ref="2"/>
</evidence>
<evidence type="ECO:0000305" key="13"/>
<evidence type="ECO:0000312" key="14">
    <source>
        <dbReference type="EMBL" id="AAB58417.1"/>
    </source>
</evidence>
<sequence>MKPLVKLFLLFCLVGIVLSRPMPEDEEPVAEGGDDDASGESEGEEETTDDAGGDGGEEENEGEEHAGDKDAGGEDTGKEENTGHDDAGEEDAGEEDAGEEDAGEEDAGEEDAEKEEGEKEDAGDDAGSDDGEEDSTGGDEGEDNAEDSKGSEKNDPADTYRQVVALLDKDTKVDHIQSEYLRSALNNDLQSEVRVPVVEAIGRIGDYSKIQGCFKSMGKDVKKVISEEEKKFKSCMSKKKSEYQCSEDSFAAAKSKLSPITSKIKSCVSSKGR</sequence>
<dbReference type="EMBL" id="AF001927">
    <property type="protein sequence ID" value="AAB58417.1"/>
    <property type="molecule type" value="mRNA"/>
</dbReference>
<dbReference type="EMBL" id="DQ440089">
    <property type="protein sequence ID" value="ABF18122.1"/>
    <property type="molecule type" value="mRNA"/>
</dbReference>
<dbReference type="EMBL" id="DQ440092">
    <property type="protein sequence ID" value="ABF18125.1"/>
    <property type="molecule type" value="mRNA"/>
</dbReference>
<dbReference type="EMBL" id="CH477649">
    <property type="protein sequence ID" value="EAT37812.1"/>
    <property type="molecule type" value="Genomic_DNA"/>
</dbReference>
<dbReference type="RefSeq" id="XP_001660691.1">
    <property type="nucleotide sequence ID" value="XM_001660641.1"/>
</dbReference>
<dbReference type="SMR" id="O01949"/>
<dbReference type="IntAct" id="O01949">
    <property type="interactions" value="2"/>
</dbReference>
<dbReference type="MINT" id="O01949"/>
<dbReference type="STRING" id="7159.O01949"/>
<dbReference type="Allergome" id="3054">
    <property type="allergen name" value="Aed a 3.0101"/>
</dbReference>
<dbReference type="Allergome" id="5">
    <property type="allergen name" value="Aed a 3"/>
</dbReference>
<dbReference type="PaxDb" id="7159-AAEL010235-PA"/>
<dbReference type="GeneID" id="5580040"/>
<dbReference type="KEGG" id="aag:5580040"/>
<dbReference type="VEuPathDB" id="VectorBase:AAEL010235"/>
<dbReference type="eggNOG" id="ENOG502TC7R">
    <property type="taxonomic scope" value="Eukaryota"/>
</dbReference>
<dbReference type="HOGENOM" id="CLU_1103566_0_0_1"/>
<dbReference type="InParanoid" id="O01949"/>
<dbReference type="OMA" id="TYRQVHK"/>
<dbReference type="OrthoDB" id="7744424at2759"/>
<dbReference type="Proteomes" id="UP000008820">
    <property type="component" value="Chromosome 2"/>
</dbReference>
<dbReference type="Proteomes" id="UP000682892">
    <property type="component" value="Unassembled WGS sequence"/>
</dbReference>
<dbReference type="GO" id="GO:0005615">
    <property type="term" value="C:extracellular space"/>
    <property type="evidence" value="ECO:0000314"/>
    <property type="project" value="UniProtKB"/>
</dbReference>
<dbReference type="GO" id="GO:0019863">
    <property type="term" value="F:IgE binding"/>
    <property type="evidence" value="ECO:0007669"/>
    <property type="project" value="UniProtKB-KW"/>
</dbReference>
<dbReference type="GO" id="GO:0090729">
    <property type="term" value="F:toxin activity"/>
    <property type="evidence" value="ECO:0007669"/>
    <property type="project" value="UniProtKB-KW"/>
</dbReference>
<dbReference type="Gene3D" id="6.10.140.1890">
    <property type="match status" value="1"/>
</dbReference>
<dbReference type="InterPro" id="IPR017262">
    <property type="entry name" value="Aegyptin-like"/>
</dbReference>
<dbReference type="InterPro" id="IPR056799">
    <property type="entry name" value="ALL3/gSG7_salivary-like_helix"/>
</dbReference>
<dbReference type="Pfam" id="PF25001">
    <property type="entry name" value="Aegyptin_C"/>
    <property type="match status" value="1"/>
</dbReference>
<dbReference type="PIRSF" id="PIRSF037682">
    <property type="entry name" value="Salivary_gland_allergen_Aed3"/>
    <property type="match status" value="1"/>
</dbReference>
<feature type="signal peptide" evidence="3">
    <location>
        <begin position="1"/>
        <end position="19"/>
    </location>
</feature>
<feature type="chain" id="PRO_0000460500" description="Aegyptin" evidence="13">
    <location>
        <begin position="20"/>
        <end position="273"/>
    </location>
</feature>
<feature type="region of interest" description="Disordered" evidence="2">
    <location>
        <begin position="20"/>
        <end position="160"/>
    </location>
</feature>
<feature type="region of interest" description="Mediates binding of host collagen" evidence="4">
    <location>
        <begin position="137"/>
        <end position="273"/>
    </location>
</feature>
<feature type="compositionally biased region" description="Acidic residues" evidence="2">
    <location>
        <begin position="24"/>
        <end position="62"/>
    </location>
</feature>
<feature type="compositionally biased region" description="Basic and acidic residues" evidence="2">
    <location>
        <begin position="63"/>
        <end position="86"/>
    </location>
</feature>
<feature type="compositionally biased region" description="Acidic residues" evidence="2">
    <location>
        <begin position="87"/>
        <end position="145"/>
    </location>
</feature>
<feature type="compositionally biased region" description="Basic and acidic residues" evidence="2">
    <location>
        <begin position="146"/>
        <end position="158"/>
    </location>
</feature>
<feature type="disulfide bond" evidence="1">
    <location>
        <begin position="213"/>
        <end position="267"/>
    </location>
</feature>
<feature type="disulfide bond" evidence="1">
    <location>
        <begin position="235"/>
        <end position="245"/>
    </location>
</feature>
<feature type="splice variant" id="VSP_034685" description="In isoform 1 and isoform 3." evidence="9 12">
    <location>
        <begin position="35"/>
        <end position="44"/>
    </location>
</feature>
<feature type="splice variant" id="VSP_034686" description="In isoform 1." evidence="12">
    <location>
        <begin position="85"/>
        <end position="94"/>
    </location>
</feature>
<feature type="splice variant" id="VSP_034687" description="In isoform 3." evidence="9">
    <location>
        <begin position="85"/>
        <end position="89"/>
    </location>
</feature>
<feature type="sequence conflict" description="In Ref. 2; AAB58417 and 3; ABF18125." evidence="13" ref="2 3">
    <original>K</original>
    <variation>E</variation>
    <location>
        <position position="69"/>
    </location>
</feature>
<feature type="sequence conflict" description="In Ref. 2; AAB58417 and 3; ABF18125." evidence="13" ref="2 3">
    <original>D</original>
    <variation>A</variation>
    <location>
        <position position="143"/>
    </location>
</feature>
<name>ALL3_AEDAE</name>
<reference evidence="14" key="1">
    <citation type="journal article" date="2016" name="Allergy">
        <title>Mosquito salivary allergen Aed a 3: cloning, comprehensive molecular analysis, and clinical evaluation.</title>
        <authorList>
            <person name="Peng Z."/>
            <person name="Xu W.W."/>
            <person name="Sham Y."/>
            <person name="Lam H."/>
            <person name="Sun D."/>
            <person name="Cheng L."/>
            <person name="Rasic N.F."/>
            <person name="Guan Q."/>
            <person name="James A.A."/>
            <person name="Simons F.E."/>
        </authorList>
    </citation>
    <scope>NUCLEOTIDE SEQUENCE [MRNA]</scope>
    <scope>SUBCELLULAR LOCATION</scope>
    <scope>TISSUE SPECIFICITY</scope>
    <scope>ALLERGEN</scope>
</reference>
<reference key="2">
    <citation type="submission" date="1997-05" db="EMBL/GenBank/DDBJ databases">
        <title>Molecular cloning and characterization of the gene encoding a 30 kDa salivary allergen of mosquito Aedes aegypti.</title>
        <authorList>
            <person name="Xu W."/>
            <person name="Simons F.E.R."/>
            <person name="Peng Z."/>
        </authorList>
    </citation>
    <scope>NUCLEOTIDE SEQUENCE [MRNA] (ISOFORM 1)</scope>
    <source>
        <strain>Rockefeller</strain>
        <tissue>Salivary gland</tissue>
    </source>
</reference>
<reference key="3">
    <citation type="journal article" date="2007" name="BMC Genomics">
        <title>An annotated catalogue of salivary gland transcripts in the adult female mosquito, Aedes aegypti.</title>
        <authorList>
            <person name="Ribeiro J.M.C."/>
            <person name="Arca B."/>
            <person name="Lombardo F."/>
            <person name="Calvo E."/>
            <person name="Phan V.M."/>
            <person name="Chandra P.K."/>
            <person name="Wikel S.K."/>
        </authorList>
    </citation>
    <scope>NUCLEOTIDE SEQUENCE [LARGE SCALE MRNA] (ISOFORMS 2 AND 3)</scope>
    <source>
        <strain>Black-eyed Liverpool</strain>
        <tissue>Salivary gland</tissue>
    </source>
</reference>
<reference key="4">
    <citation type="journal article" date="2007" name="Science">
        <title>Genome sequence of Aedes aegypti, a major arbovirus vector.</title>
        <authorList>
            <person name="Nene V."/>
            <person name="Wortman J.R."/>
            <person name="Lawson D."/>
            <person name="Haas B.J."/>
            <person name="Kodira C.D."/>
            <person name="Tu Z.J."/>
            <person name="Loftus B.J."/>
            <person name="Xi Z."/>
            <person name="Megy K."/>
            <person name="Grabherr M."/>
            <person name="Ren Q."/>
            <person name="Zdobnov E.M."/>
            <person name="Lobo N.F."/>
            <person name="Campbell K.S."/>
            <person name="Brown S.E."/>
            <person name="Bonaldo M.F."/>
            <person name="Zhu J."/>
            <person name="Sinkins S.P."/>
            <person name="Hogenkamp D.G."/>
            <person name="Amedeo P."/>
            <person name="Arensburger P."/>
            <person name="Atkinson P.W."/>
            <person name="Bidwell S.L."/>
            <person name="Biedler J."/>
            <person name="Birney E."/>
            <person name="Bruggner R.V."/>
            <person name="Costas J."/>
            <person name="Coy M.R."/>
            <person name="Crabtree J."/>
            <person name="Crawford M."/>
            <person name="DeBruyn B."/>
            <person name="DeCaprio D."/>
            <person name="Eiglmeier K."/>
            <person name="Eisenstadt E."/>
            <person name="El-Dorry H."/>
            <person name="Gelbart W.M."/>
            <person name="Gomes S.L."/>
            <person name="Hammond M."/>
            <person name="Hannick L.I."/>
            <person name="Hogan J.R."/>
            <person name="Holmes M.H."/>
            <person name="Jaffe D."/>
            <person name="Johnston S.J."/>
            <person name="Kennedy R.C."/>
            <person name="Koo H."/>
            <person name="Kravitz S."/>
            <person name="Kriventseva E.V."/>
            <person name="Kulp D."/>
            <person name="Labutti K."/>
            <person name="Lee E."/>
            <person name="Li S."/>
            <person name="Lovin D.D."/>
            <person name="Mao C."/>
            <person name="Mauceli E."/>
            <person name="Menck C.F."/>
            <person name="Miller J.R."/>
            <person name="Montgomery P."/>
            <person name="Mori A."/>
            <person name="Nascimento A.L."/>
            <person name="Naveira H.F."/>
            <person name="Nusbaum C."/>
            <person name="O'Leary S.B."/>
            <person name="Orvis J."/>
            <person name="Pertea M."/>
            <person name="Quesneville H."/>
            <person name="Reidenbach K.R."/>
            <person name="Rogers Y.-H.C."/>
            <person name="Roth C.W."/>
            <person name="Schneider J.R."/>
            <person name="Schatz M."/>
            <person name="Shumway M."/>
            <person name="Stanke M."/>
            <person name="Stinson E.O."/>
            <person name="Tubio J.M.C."/>
            <person name="Vanzee J.P."/>
            <person name="Verjovski-Almeida S."/>
            <person name="Werner D."/>
            <person name="White O.R."/>
            <person name="Wyder S."/>
            <person name="Zeng Q."/>
            <person name="Zhao Q."/>
            <person name="Zhao Y."/>
            <person name="Hill C.A."/>
            <person name="Raikhel A.S."/>
            <person name="Soares M.B."/>
            <person name="Knudson D.L."/>
            <person name="Lee N.H."/>
            <person name="Galagan J."/>
            <person name="Salzberg S.L."/>
            <person name="Paulsen I.T."/>
            <person name="Dimopoulos G."/>
            <person name="Collins F.H."/>
            <person name="Bruce B."/>
            <person name="Fraser-Liggett C.M."/>
            <person name="Severson D.W."/>
        </authorList>
    </citation>
    <scope>NUCLEOTIDE SEQUENCE [LARGE SCALE GENOMIC DNA]</scope>
    <source>
        <strain>LVPib12</strain>
    </source>
</reference>
<reference key="5">
    <citation type="journal article" date="2007" name="J. Biol. Chem.">
        <title>Aegyptin, a novel mosquito salivary gland protein, specifically binds to collagen and prevents its interaction with platelet glycoprotein VI, integrin alpha2beta1, and von Willebrand factor.</title>
        <authorList>
            <person name="Calvo E."/>
            <person name="Tokumasu F."/>
            <person name="Marinotti O."/>
            <person name="Villeval J.L."/>
            <person name="Ribeiro J.M.C."/>
            <person name="Francischetti I.M.B."/>
        </authorList>
    </citation>
    <scope>PROTEIN SEQUENCE OF 20-22</scope>
    <scope>FUNCTION</scope>
    <scope>SUBCELLULAR LOCATION</scope>
    <scope>TISSUE SPECIFICITY</scope>
</reference>
<reference key="6">
    <citation type="journal article" date="2010" name="FEBS J.">
        <title>Aegyptin displays high-affinity for the von Willebrand factor binding site (RGQOGVMGF) in collagen and inhibits carotid thrombus formation in vivo.</title>
        <authorList>
            <person name="Calvo E."/>
            <person name="Tokumasu F."/>
            <person name="Mizurini D.M."/>
            <person name="McPhie P."/>
            <person name="Narum D.L."/>
            <person name="Ribeiro J.M."/>
            <person name="Monteiro R.Q."/>
            <person name="Francischetti I.M."/>
        </authorList>
    </citation>
    <scope>FUNCTION</scope>
    <scope>SUBUNIT</scope>
    <scope>DOMAIN</scope>
</reference>
<reference key="7">
    <citation type="journal article" date="2013" name="Biochem. Biophys. Res. Commun.">
        <title>Aegyptin inhibits collagen-induced coagulation activation in vitro and thromboembolism in vivo.</title>
        <authorList>
            <person name="Mizurini D.M."/>
            <person name="Francischetti I.M."/>
            <person name="Monteiro R.Q."/>
        </authorList>
    </citation>
    <scope>FUNCTION</scope>
</reference>
<reference key="8">
    <citation type="journal article" date="2014" name="Proc. Natl. Acad. Sci. U.S.A.">
        <title>Collagen-binding protein, Aegyptin, regulates probing time and blood feeding success in the dengue vector mosquito, Aedes aegypti.</title>
        <authorList>
            <person name="Chagas A.C."/>
            <person name="Ramirez J.L."/>
            <person name="Jasinskiene N."/>
            <person name="James A.A."/>
            <person name="Ribeiro J.M."/>
            <person name="Marinotti O."/>
            <person name="Calvo E."/>
        </authorList>
    </citation>
    <scope>FUNCTION</scope>
    <scope>DISRUPTION PHENOTYPE</scope>
</reference>
<reference key="9">
    <citation type="journal article" date="2014" name="Virology">
        <title>Aedes aegypti salivary protein 'aegyptin' co-inoculation modulates dengue virus infection in the vertebrate host.</title>
        <authorList>
            <person name="McCracken M.K."/>
            <person name="Christofferson R.C."/>
            <person name="Grasperge B.J."/>
            <person name="Calvo E."/>
            <person name="Chisenhall D.M."/>
            <person name="Mores C.N."/>
        </authorList>
    </citation>
    <scope>FUNCTION</scope>
    <scope>FUNCTION (MICROBIAL INFECTION)</scope>
</reference>
<comment type="function">
    <text evidence="3 4 5 6 7">Modulates blood feeding of female mosquitoes on vertebrate hosts (PubMed:24778255). Inhibits collagen-induced platelet aggregation in the host via preventing collagen interaction with its three major ligands: glycoprotein VI, integrin alpha-2/beta-1 (ITGA2/ITGB1) and von Willebrand factor (VWF) (PubMed:17650501, PubMed:20015075, PubMed:24778255). Prevents collagen-mediated thrombus formation in the host (PubMed:20015075, PubMed:23726920). Binds to host collagens but not to laminin, vitronectin (VTN), fibronectin (FN1), von Willebrand factor (VWF) and fibrinogen (PubMed:17650501). Influences cytokine production and populations of circulating leukocytes (PubMed:25173089).</text>
</comment>
<comment type="function">
    <text evidence="7">(Microbial infection) Reduces replication of dengue virus type 2 at inoculation site and viremia levels on day 2 post-inoculation (PubMed:25173089). Promotes production of pro-inflammatory cytokines, such as GM-CSF (CSF2), IFN-gamma (IFNG), IL5 and IL6, in the lymph nodes of mice infected with dengue virus type 2 (PubMed:25173089). Increases the number of circulating eosinophils in mice infected with dengue virus type 2 (PubMed:25173089). Decreases the number of circulating monocytes in mice infected with dengue virus type 2 (PubMed:25173089).</text>
</comment>
<comment type="subunit">
    <text evidence="4">Monomer; exhibits non-globular elongated shape in solution.</text>
</comment>
<comment type="interaction">
    <interactant intactId="EBI-7685554">
        <id>O01949</id>
    </interactant>
    <interactant intactId="EBI-982999">
        <id>P02452</id>
        <label>COL1A1</label>
    </interactant>
    <organismsDiffer>true</organismsDiffer>
    <experiments>5</experiments>
</comment>
<comment type="interaction">
    <interactant intactId="EBI-7685554">
        <id>O01949</id>
    </interactant>
    <interactant intactId="EBI-2431491">
        <id>P02461</id>
        <label>COL3A1</label>
    </interactant>
    <organismsDiffer>true</organismsDiffer>
    <experiments>2</experiments>
</comment>
<comment type="subcellular location">
    <subcellularLocation>
        <location evidence="3 8">Secreted</location>
    </subcellularLocation>
</comment>
<comment type="alternative products">
    <event type="alternative splicing"/>
    <isoform>
        <id>O01949-1</id>
        <name>2</name>
        <sequence type="displayed"/>
    </isoform>
    <isoform>
        <id>O01949-2</id>
        <name>1</name>
        <sequence type="described" ref="VSP_034685 VSP_034686"/>
    </isoform>
    <isoform>
        <id>O01949-3</id>
        <name>3</name>
        <sequence type="described" ref="VSP_034685 VSP_034687"/>
    </isoform>
</comment>
<comment type="tissue specificity">
    <text evidence="3 8">Female saliva (at protein level) (PubMed:17650501, PubMed:26608594). Adult female salivary gland (at protein level) (PubMed:17650501).</text>
</comment>
<comment type="disruption phenotype">
    <text evidence="6">RNAi-mediated knockdown results in significantly increased probing time and decreased feeding success when mosquitoes are fed on mice but not when using artificial feeding system with defibrinated human blood (PubMed:24778255). Reduced collagen binding activity of salivary gland extracts and saliva (PubMed:24778255). Reduced capacity of salivary gland extracts to inhibit collagen-induced platelet aggregation (PubMed:24778255). No significant effects on ADP-induced platelet aggregation (PubMed:24778255). No significant effects on the anticoagulant activity of salivary glands (PubMed:24778255).</text>
</comment>
<comment type="allergen">
    <text evidence="8">Causes an allergic reaction in human (PubMed:26608594). Binds to IgE (PubMed:26608594).</text>
</comment>
<comment type="miscellaneous">
    <text evidence="5">Protects mice from collagen- and epinephrine-induced thrombus formation in a murine model of lethal pulmonary thromboembolism.</text>
</comment>
<comment type="similarity">
    <text evidence="13">Belongs to the aegyptin family.</text>
</comment>
<keyword id="KW-0020">Allergen</keyword>
<keyword id="KW-0025">Alternative splicing</keyword>
<keyword id="KW-0903">Direct protein sequencing</keyword>
<keyword id="KW-1015">Disulfide bond</keyword>
<keyword id="KW-1199">Hemostasis impairing toxin</keyword>
<keyword id="KW-0389">IgE-binding protein</keyword>
<keyword id="KW-1201">Platelet aggregation inhibiting toxin</keyword>
<keyword id="KW-1185">Reference proteome</keyword>
<keyword id="KW-0964">Secreted</keyword>
<keyword id="KW-0732">Signal</keyword>
<keyword id="KW-0800">Toxin</keyword>